<gene>
    <name evidence="1" type="primary">aroK</name>
    <name type="ordered locus">BCG_2561c</name>
</gene>
<sequence>MAPKAVLVGLPGSGKSTIGRRLAKALGVGLLDTDVAIEQRTGRSIADIFATDGEQEFRRIEEDVVRAALADHDGVLSLGGGAVTSPGVRAALAGHTVVYLEISAAEGVRRTGGNTVRPLLAGPDRAEKYRALMAKRAPLYRRVATMRVDTNRRNPGAVVRHILSRLQVPSPSEAAT</sequence>
<name>AROK_MYCBP</name>
<dbReference type="EC" id="2.7.1.71" evidence="1"/>
<dbReference type="EMBL" id="AM408590">
    <property type="protein sequence ID" value="CAL72549.1"/>
    <property type="molecule type" value="Genomic_DNA"/>
</dbReference>
<dbReference type="RefSeq" id="WP_003413021.1">
    <property type="nucleotide sequence ID" value="NC_008769.1"/>
</dbReference>
<dbReference type="SMR" id="A1KLN6"/>
<dbReference type="KEGG" id="mbb:BCG_2561c"/>
<dbReference type="HOGENOM" id="CLU_057607_3_3_11"/>
<dbReference type="UniPathway" id="UPA00053">
    <property type="reaction ID" value="UER00088"/>
</dbReference>
<dbReference type="Proteomes" id="UP000001472">
    <property type="component" value="Chromosome"/>
</dbReference>
<dbReference type="GO" id="GO:0005829">
    <property type="term" value="C:cytosol"/>
    <property type="evidence" value="ECO:0007669"/>
    <property type="project" value="TreeGrafter"/>
</dbReference>
<dbReference type="GO" id="GO:0005524">
    <property type="term" value="F:ATP binding"/>
    <property type="evidence" value="ECO:0007669"/>
    <property type="project" value="UniProtKB-UniRule"/>
</dbReference>
<dbReference type="GO" id="GO:0000287">
    <property type="term" value="F:magnesium ion binding"/>
    <property type="evidence" value="ECO:0007669"/>
    <property type="project" value="UniProtKB-UniRule"/>
</dbReference>
<dbReference type="GO" id="GO:0004765">
    <property type="term" value="F:shikimate kinase activity"/>
    <property type="evidence" value="ECO:0007669"/>
    <property type="project" value="UniProtKB-UniRule"/>
</dbReference>
<dbReference type="GO" id="GO:0008652">
    <property type="term" value="P:amino acid biosynthetic process"/>
    <property type="evidence" value="ECO:0007669"/>
    <property type="project" value="UniProtKB-KW"/>
</dbReference>
<dbReference type="GO" id="GO:0009073">
    <property type="term" value="P:aromatic amino acid family biosynthetic process"/>
    <property type="evidence" value="ECO:0007669"/>
    <property type="project" value="UniProtKB-KW"/>
</dbReference>
<dbReference type="GO" id="GO:0009423">
    <property type="term" value="P:chorismate biosynthetic process"/>
    <property type="evidence" value="ECO:0007669"/>
    <property type="project" value="UniProtKB-UniRule"/>
</dbReference>
<dbReference type="CDD" id="cd00464">
    <property type="entry name" value="SK"/>
    <property type="match status" value="1"/>
</dbReference>
<dbReference type="FunFam" id="3.40.50.300:FF:002320">
    <property type="entry name" value="Shikimate kinase"/>
    <property type="match status" value="1"/>
</dbReference>
<dbReference type="Gene3D" id="3.40.50.300">
    <property type="entry name" value="P-loop containing nucleotide triphosphate hydrolases"/>
    <property type="match status" value="1"/>
</dbReference>
<dbReference type="HAMAP" id="MF_00109">
    <property type="entry name" value="Shikimate_kinase"/>
    <property type="match status" value="1"/>
</dbReference>
<dbReference type="InterPro" id="IPR027417">
    <property type="entry name" value="P-loop_NTPase"/>
</dbReference>
<dbReference type="InterPro" id="IPR031322">
    <property type="entry name" value="Shikimate/glucono_kinase"/>
</dbReference>
<dbReference type="InterPro" id="IPR000623">
    <property type="entry name" value="Shikimate_kinase/TSH1"/>
</dbReference>
<dbReference type="InterPro" id="IPR023000">
    <property type="entry name" value="Shikimate_kinase_CS"/>
</dbReference>
<dbReference type="PANTHER" id="PTHR21087">
    <property type="entry name" value="SHIKIMATE KINASE"/>
    <property type="match status" value="1"/>
</dbReference>
<dbReference type="PANTHER" id="PTHR21087:SF16">
    <property type="entry name" value="SHIKIMATE KINASE 1, CHLOROPLASTIC"/>
    <property type="match status" value="1"/>
</dbReference>
<dbReference type="Pfam" id="PF01202">
    <property type="entry name" value="SKI"/>
    <property type="match status" value="1"/>
</dbReference>
<dbReference type="PRINTS" id="PR01100">
    <property type="entry name" value="SHIKIMTKNASE"/>
</dbReference>
<dbReference type="SUPFAM" id="SSF52540">
    <property type="entry name" value="P-loop containing nucleoside triphosphate hydrolases"/>
    <property type="match status" value="1"/>
</dbReference>
<dbReference type="PROSITE" id="PS01128">
    <property type="entry name" value="SHIKIMATE_KINASE"/>
    <property type="match status" value="1"/>
</dbReference>
<reference key="1">
    <citation type="journal article" date="2007" name="Proc. Natl. Acad. Sci. U.S.A.">
        <title>Genome plasticity of BCG and impact on vaccine efficacy.</title>
        <authorList>
            <person name="Brosch R."/>
            <person name="Gordon S.V."/>
            <person name="Garnier T."/>
            <person name="Eiglmeier K."/>
            <person name="Frigui W."/>
            <person name="Valenti P."/>
            <person name="Dos Santos S."/>
            <person name="Duthoy S."/>
            <person name="Lacroix C."/>
            <person name="Garcia-Pelayo C."/>
            <person name="Inwald J.K."/>
            <person name="Golby P."/>
            <person name="Garcia J.N."/>
            <person name="Hewinson R.G."/>
            <person name="Behr M.A."/>
            <person name="Quail M.A."/>
            <person name="Churcher C."/>
            <person name="Barrell B.G."/>
            <person name="Parkhill J."/>
            <person name="Cole S.T."/>
        </authorList>
    </citation>
    <scope>NUCLEOTIDE SEQUENCE [LARGE SCALE GENOMIC DNA]</scope>
    <source>
        <strain>BCG / Pasteur 1173P2</strain>
    </source>
</reference>
<keyword id="KW-0028">Amino-acid biosynthesis</keyword>
<keyword id="KW-0057">Aromatic amino acid biosynthesis</keyword>
<keyword id="KW-0067">ATP-binding</keyword>
<keyword id="KW-0963">Cytoplasm</keyword>
<keyword id="KW-0418">Kinase</keyword>
<keyword id="KW-0460">Magnesium</keyword>
<keyword id="KW-0479">Metal-binding</keyword>
<keyword id="KW-0547">Nucleotide-binding</keyword>
<keyword id="KW-0808">Transferase</keyword>
<proteinExistence type="inferred from homology"/>
<accession>A1KLN6</accession>
<feature type="chain" id="PRO_1000022981" description="Shikimate kinase">
    <location>
        <begin position="1"/>
        <end position="176"/>
    </location>
</feature>
<feature type="binding site" evidence="1">
    <location>
        <begin position="12"/>
        <end position="17"/>
    </location>
    <ligand>
        <name>ATP</name>
        <dbReference type="ChEBI" id="CHEBI:30616"/>
    </ligand>
</feature>
<feature type="binding site" evidence="1">
    <location>
        <position position="16"/>
    </location>
    <ligand>
        <name>Mg(2+)</name>
        <dbReference type="ChEBI" id="CHEBI:18420"/>
    </ligand>
</feature>
<feature type="binding site" evidence="1">
    <location>
        <position position="34"/>
    </location>
    <ligand>
        <name>substrate</name>
    </ligand>
</feature>
<feature type="binding site" evidence="1">
    <location>
        <position position="58"/>
    </location>
    <ligand>
        <name>substrate</name>
    </ligand>
</feature>
<feature type="binding site" evidence="1">
    <location>
        <position position="80"/>
    </location>
    <ligand>
        <name>substrate</name>
    </ligand>
</feature>
<feature type="binding site" evidence="1">
    <location>
        <position position="117"/>
    </location>
    <ligand>
        <name>ATP</name>
        <dbReference type="ChEBI" id="CHEBI:30616"/>
    </ligand>
</feature>
<feature type="binding site" evidence="1">
    <location>
        <position position="136"/>
    </location>
    <ligand>
        <name>substrate</name>
    </ligand>
</feature>
<feature type="binding site" evidence="1">
    <location>
        <position position="153"/>
    </location>
    <ligand>
        <name>ATP</name>
        <dbReference type="ChEBI" id="CHEBI:30616"/>
    </ligand>
</feature>
<evidence type="ECO:0000255" key="1">
    <source>
        <dbReference type="HAMAP-Rule" id="MF_00109"/>
    </source>
</evidence>
<organism>
    <name type="scientific">Mycobacterium bovis (strain BCG / Pasteur 1173P2)</name>
    <dbReference type="NCBI Taxonomy" id="410289"/>
    <lineage>
        <taxon>Bacteria</taxon>
        <taxon>Bacillati</taxon>
        <taxon>Actinomycetota</taxon>
        <taxon>Actinomycetes</taxon>
        <taxon>Mycobacteriales</taxon>
        <taxon>Mycobacteriaceae</taxon>
        <taxon>Mycobacterium</taxon>
        <taxon>Mycobacterium tuberculosis complex</taxon>
    </lineage>
</organism>
<protein>
    <recommendedName>
        <fullName evidence="1">Shikimate kinase</fullName>
        <shortName evidence="1">SK</shortName>
        <ecNumber evidence="1">2.7.1.71</ecNumber>
    </recommendedName>
</protein>
<comment type="function">
    <text evidence="1">Catalyzes the specific phosphorylation of the 3-hydroxyl group of shikimic acid using ATP as a cosubstrate.</text>
</comment>
<comment type="catalytic activity">
    <reaction evidence="1">
        <text>shikimate + ATP = 3-phosphoshikimate + ADP + H(+)</text>
        <dbReference type="Rhea" id="RHEA:13121"/>
        <dbReference type="ChEBI" id="CHEBI:15378"/>
        <dbReference type="ChEBI" id="CHEBI:30616"/>
        <dbReference type="ChEBI" id="CHEBI:36208"/>
        <dbReference type="ChEBI" id="CHEBI:145989"/>
        <dbReference type="ChEBI" id="CHEBI:456216"/>
        <dbReference type="EC" id="2.7.1.71"/>
    </reaction>
</comment>
<comment type="cofactor">
    <cofactor evidence="1">
        <name>Mg(2+)</name>
        <dbReference type="ChEBI" id="CHEBI:18420"/>
    </cofactor>
    <text evidence="1">Binds 1 Mg(2+) ion per subunit.</text>
</comment>
<comment type="pathway">
    <text evidence="1">Metabolic intermediate biosynthesis; chorismate biosynthesis; chorismate from D-erythrose 4-phosphate and phosphoenolpyruvate: step 5/7.</text>
</comment>
<comment type="subunit">
    <text evidence="1">Monomer.</text>
</comment>
<comment type="subcellular location">
    <subcellularLocation>
        <location evidence="1">Cytoplasm</location>
    </subcellularLocation>
</comment>
<comment type="similarity">
    <text evidence="1">Belongs to the shikimate kinase family.</text>
</comment>